<evidence type="ECO:0000250" key="1">
    <source>
        <dbReference type="UniProtKB" id="C0LGT6"/>
    </source>
</evidence>
<evidence type="ECO:0000250" key="2">
    <source>
        <dbReference type="UniProtKB" id="O22476"/>
    </source>
</evidence>
<evidence type="ECO:0000255" key="3"/>
<evidence type="ECO:0000255" key="4">
    <source>
        <dbReference type="PROSITE-ProRule" id="PRU00159"/>
    </source>
</evidence>
<evidence type="ECO:0000255" key="5">
    <source>
        <dbReference type="PROSITE-ProRule" id="PRU10027"/>
    </source>
</evidence>
<evidence type="ECO:0000269" key="6">
    <source>
    </source>
</evidence>
<evidence type="ECO:0000269" key="7">
    <source>
    </source>
</evidence>
<evidence type="ECO:0000269" key="8">
    <source>
    </source>
</evidence>
<evidence type="ECO:0000303" key="9">
    <source>
    </source>
</evidence>
<evidence type="ECO:0000305" key="10"/>
<evidence type="ECO:0000312" key="11">
    <source>
        <dbReference type="Araport" id="AT1G72300"/>
    </source>
</evidence>
<evidence type="ECO:0000312" key="12">
    <source>
        <dbReference type="EMBL" id="AAG51803.1"/>
    </source>
</evidence>
<keyword id="KW-0067">ATP-binding</keyword>
<keyword id="KW-1003">Cell membrane</keyword>
<keyword id="KW-0325">Glycoprotein</keyword>
<keyword id="KW-0418">Kinase</keyword>
<keyword id="KW-0433">Leucine-rich repeat</keyword>
<keyword id="KW-0472">Membrane</keyword>
<keyword id="KW-0547">Nucleotide-binding</keyword>
<keyword id="KW-0597">Phosphoprotein</keyword>
<keyword id="KW-0675">Receptor</keyword>
<keyword id="KW-1185">Reference proteome</keyword>
<keyword id="KW-0677">Repeat</keyword>
<keyword id="KW-0723">Serine/threonine-protein kinase</keyword>
<keyword id="KW-0808">Transferase</keyword>
<keyword id="KW-0812">Transmembrane</keyword>
<keyword id="KW-1133">Transmembrane helix</keyword>
<organism>
    <name type="scientific">Arabidopsis thaliana</name>
    <name type="common">Mouse-ear cress</name>
    <dbReference type="NCBI Taxonomy" id="3702"/>
    <lineage>
        <taxon>Eukaryota</taxon>
        <taxon>Viridiplantae</taxon>
        <taxon>Streptophyta</taxon>
        <taxon>Embryophyta</taxon>
        <taxon>Tracheophyta</taxon>
        <taxon>Spermatophyta</taxon>
        <taxon>Magnoliopsida</taxon>
        <taxon>eudicotyledons</taxon>
        <taxon>Gunneridae</taxon>
        <taxon>Pentapetalae</taxon>
        <taxon>rosids</taxon>
        <taxon>malvids</taxon>
        <taxon>Brassicales</taxon>
        <taxon>Brassicaceae</taxon>
        <taxon>Camelineae</taxon>
        <taxon>Arabidopsis</taxon>
    </lineage>
</organism>
<reference key="1">
    <citation type="journal article" date="2000" name="Nature">
        <title>Sequence and analysis of chromosome 1 of the plant Arabidopsis thaliana.</title>
        <authorList>
            <person name="Theologis A."/>
            <person name="Ecker J.R."/>
            <person name="Palm C.J."/>
            <person name="Federspiel N.A."/>
            <person name="Kaul S."/>
            <person name="White O."/>
            <person name="Alonso J."/>
            <person name="Altafi H."/>
            <person name="Araujo R."/>
            <person name="Bowman C.L."/>
            <person name="Brooks S.Y."/>
            <person name="Buehler E."/>
            <person name="Chan A."/>
            <person name="Chao Q."/>
            <person name="Chen H."/>
            <person name="Cheuk R.F."/>
            <person name="Chin C.W."/>
            <person name="Chung M.K."/>
            <person name="Conn L."/>
            <person name="Conway A.B."/>
            <person name="Conway A.R."/>
            <person name="Creasy T.H."/>
            <person name="Dewar K."/>
            <person name="Dunn P."/>
            <person name="Etgu P."/>
            <person name="Feldblyum T.V."/>
            <person name="Feng J.-D."/>
            <person name="Fong B."/>
            <person name="Fujii C.Y."/>
            <person name="Gill J.E."/>
            <person name="Goldsmith A.D."/>
            <person name="Haas B."/>
            <person name="Hansen N.F."/>
            <person name="Hughes B."/>
            <person name="Huizar L."/>
            <person name="Hunter J.L."/>
            <person name="Jenkins J."/>
            <person name="Johnson-Hopson C."/>
            <person name="Khan S."/>
            <person name="Khaykin E."/>
            <person name="Kim C.J."/>
            <person name="Koo H.L."/>
            <person name="Kremenetskaia I."/>
            <person name="Kurtz D.B."/>
            <person name="Kwan A."/>
            <person name="Lam B."/>
            <person name="Langin-Hooper S."/>
            <person name="Lee A."/>
            <person name="Lee J.M."/>
            <person name="Lenz C.A."/>
            <person name="Li J.H."/>
            <person name="Li Y.-P."/>
            <person name="Lin X."/>
            <person name="Liu S.X."/>
            <person name="Liu Z.A."/>
            <person name="Luros J.S."/>
            <person name="Maiti R."/>
            <person name="Marziali A."/>
            <person name="Militscher J."/>
            <person name="Miranda M."/>
            <person name="Nguyen M."/>
            <person name="Nierman W.C."/>
            <person name="Osborne B.I."/>
            <person name="Pai G."/>
            <person name="Peterson J."/>
            <person name="Pham P.K."/>
            <person name="Rizzo M."/>
            <person name="Rooney T."/>
            <person name="Rowley D."/>
            <person name="Sakano H."/>
            <person name="Salzberg S.L."/>
            <person name="Schwartz J.R."/>
            <person name="Shinn P."/>
            <person name="Southwick A.M."/>
            <person name="Sun H."/>
            <person name="Tallon L.J."/>
            <person name="Tambunga G."/>
            <person name="Toriumi M.J."/>
            <person name="Town C.D."/>
            <person name="Utterback T."/>
            <person name="Van Aken S."/>
            <person name="Vaysberg M."/>
            <person name="Vysotskaia V.S."/>
            <person name="Walker M."/>
            <person name="Wu D."/>
            <person name="Yu G."/>
            <person name="Fraser C.M."/>
            <person name="Venter J.C."/>
            <person name="Davis R.W."/>
        </authorList>
    </citation>
    <scope>NUCLEOTIDE SEQUENCE [LARGE SCALE GENOMIC DNA]</scope>
    <source>
        <strain>cv. Columbia</strain>
    </source>
</reference>
<reference key="2">
    <citation type="journal article" date="2017" name="Plant J.">
        <title>Araport11: a complete reannotation of the Arabidopsis thaliana reference genome.</title>
        <authorList>
            <person name="Cheng C.Y."/>
            <person name="Krishnakumar V."/>
            <person name="Chan A.P."/>
            <person name="Thibaud-Nissen F."/>
            <person name="Schobel S."/>
            <person name="Town C.D."/>
        </authorList>
    </citation>
    <scope>GENOME REANNOTATION</scope>
    <source>
        <strain>cv. Columbia</strain>
    </source>
</reference>
<reference key="3">
    <citation type="journal article" date="2003" name="Science">
        <title>Empirical analysis of transcriptional activity in the Arabidopsis genome.</title>
        <authorList>
            <person name="Yamada K."/>
            <person name="Lim J."/>
            <person name="Dale J.M."/>
            <person name="Chen H."/>
            <person name="Shinn P."/>
            <person name="Palm C.J."/>
            <person name="Southwick A.M."/>
            <person name="Wu H.C."/>
            <person name="Kim C.J."/>
            <person name="Nguyen M."/>
            <person name="Pham P.K."/>
            <person name="Cheuk R.F."/>
            <person name="Karlin-Newmann G."/>
            <person name="Liu S.X."/>
            <person name="Lam B."/>
            <person name="Sakano H."/>
            <person name="Wu T."/>
            <person name="Yu G."/>
            <person name="Miranda M."/>
            <person name="Quach H.L."/>
            <person name="Tripp M."/>
            <person name="Chang C.H."/>
            <person name="Lee J.M."/>
            <person name="Toriumi M.J."/>
            <person name="Chan M.M."/>
            <person name="Tang C.C."/>
            <person name="Onodera C.S."/>
            <person name="Deng J.M."/>
            <person name="Akiyama K."/>
            <person name="Ansari Y."/>
            <person name="Arakawa T."/>
            <person name="Banh J."/>
            <person name="Banno F."/>
            <person name="Bowser L."/>
            <person name="Brooks S.Y."/>
            <person name="Carninci P."/>
            <person name="Chao Q."/>
            <person name="Choy N."/>
            <person name="Enju A."/>
            <person name="Goldsmith A.D."/>
            <person name="Gurjal M."/>
            <person name="Hansen N.F."/>
            <person name="Hayashizaki Y."/>
            <person name="Johnson-Hopson C."/>
            <person name="Hsuan V.W."/>
            <person name="Iida K."/>
            <person name="Karnes M."/>
            <person name="Khan S."/>
            <person name="Koesema E."/>
            <person name="Ishida J."/>
            <person name="Jiang P.X."/>
            <person name="Jones T."/>
            <person name="Kawai J."/>
            <person name="Kamiya A."/>
            <person name="Meyers C."/>
            <person name="Nakajima M."/>
            <person name="Narusaka M."/>
            <person name="Seki M."/>
            <person name="Sakurai T."/>
            <person name="Satou M."/>
            <person name="Tamse R."/>
            <person name="Vaysberg M."/>
            <person name="Wallender E.K."/>
            <person name="Wong C."/>
            <person name="Yamamura Y."/>
            <person name="Yuan S."/>
            <person name="Shinozaki K."/>
            <person name="Davis R.W."/>
            <person name="Theologis A."/>
            <person name="Ecker J.R."/>
        </authorList>
    </citation>
    <scope>NUCLEOTIDE SEQUENCE [LARGE SCALE MRNA]</scope>
    <source>
        <strain>cv. Columbia</strain>
    </source>
</reference>
<reference key="4">
    <citation type="submission" date="2006-07" db="EMBL/GenBank/DDBJ databases">
        <title>Large-scale analysis of RIKEN Arabidopsis full-length (RAFL) cDNAs.</title>
        <authorList>
            <person name="Totoki Y."/>
            <person name="Seki M."/>
            <person name="Ishida J."/>
            <person name="Nakajima M."/>
            <person name="Enju A."/>
            <person name="Kamiya A."/>
            <person name="Narusaka M."/>
            <person name="Shin-i T."/>
            <person name="Nakagawa M."/>
            <person name="Sakamoto N."/>
            <person name="Oishi K."/>
            <person name="Kohara Y."/>
            <person name="Kobayashi M."/>
            <person name="Toyoda A."/>
            <person name="Sakaki Y."/>
            <person name="Sakurai T."/>
            <person name="Iida K."/>
            <person name="Akiyama K."/>
            <person name="Satou M."/>
            <person name="Toyoda T."/>
            <person name="Konagaya A."/>
            <person name="Carninci P."/>
            <person name="Kawai J."/>
            <person name="Hayashizaki Y."/>
            <person name="Shinozaki K."/>
        </authorList>
    </citation>
    <scope>NUCLEOTIDE SEQUENCE [LARGE SCALE MRNA]</scope>
    <source>
        <strain>cv. Columbia</strain>
    </source>
</reference>
<reference key="5">
    <citation type="journal article" date="2007" name="Proc. Natl. Acad. Sci. U.S.A.">
        <title>Tyrosine-sulfated glycopeptide involved in cellular proliferation and expansion in Arabidopsis.</title>
        <authorList>
            <person name="Amano Y."/>
            <person name="Tsubouchi H."/>
            <person name="Shinohara H."/>
            <person name="Ogawa M."/>
            <person name="Matsubayashi Y."/>
        </authorList>
    </citation>
    <scope>IDENTIFICATION</scope>
    <scope>FUNCTION</scope>
    <scope>TISSUE SPECIFICITY</scope>
    <scope>DISRUPTION PHENOTYPE</scope>
    <source>
        <strain>cv. Columbia</strain>
    </source>
</reference>
<reference key="6">
    <citation type="journal article" date="2013" name="Plant J.">
        <title>The tyrosine-sulfated peptide receptors PSKR1 and PSY1R modify the immunity of Arabidopsis to biotrophic and necrotrophic pathogens in an antagonistic manner.</title>
        <authorList>
            <person name="Mosher S."/>
            <person name="Seybold H."/>
            <person name="Rodriguez P."/>
            <person name="Stahl M."/>
            <person name="Davies K.A."/>
            <person name="Dayaratne S."/>
            <person name="Morillo S.A."/>
            <person name="Wierzba M."/>
            <person name="Favery B."/>
            <person name="Keller H."/>
            <person name="Tax F.E."/>
            <person name="Kemmerling B."/>
        </authorList>
    </citation>
    <scope>FUNCTION</scope>
    <scope>DISRUPTION PHENOTYPE</scope>
</reference>
<reference key="7">
    <citation type="journal article" date="2014" name="Plant J.">
        <title>Receptor kinase-mediated control of primary active proton pumping at the plasma membrane.</title>
        <authorList>
            <person name="Fuglsang A.T."/>
            <person name="Kristensen A."/>
            <person name="Cuin T.A."/>
            <person name="Schulze W.X."/>
            <person name="Persson J."/>
            <person name="Thuesen K.H."/>
            <person name="Ytting C.K."/>
            <person name="Oehlenschlaeger C.B."/>
            <person name="Mahmood K."/>
            <person name="Sondergaard T.E."/>
            <person name="Shabala S."/>
            <person name="Palmgren M.G."/>
        </authorList>
    </citation>
    <scope>FUNCTION</scope>
    <scope>DISRUPTION PHENOTYPE</scope>
    <scope>INTERACTION WITH AHA1 AND AHA2</scope>
    <scope>SUBUNIT</scope>
    <scope>SUBCELLULAR LOCATION</scope>
    <scope>AUTOPHOSPHORYLATION</scope>
    <scope>MUTAGENESIS OF 1072-ASP--THR-1095</scope>
</reference>
<name>PSYR1_ARATH</name>
<dbReference type="EC" id="2.7.11.1" evidence="10"/>
<dbReference type="EMBL" id="AC067754">
    <property type="protein sequence ID" value="AAG51803.1"/>
    <property type="molecule type" value="Genomic_DNA"/>
</dbReference>
<dbReference type="EMBL" id="CP002684">
    <property type="protein sequence ID" value="AEE35300.1"/>
    <property type="molecule type" value="Genomic_DNA"/>
</dbReference>
<dbReference type="EMBL" id="AY080797">
    <property type="protein sequence ID" value="AAL87278.1"/>
    <property type="molecule type" value="mRNA"/>
</dbReference>
<dbReference type="EMBL" id="AY133783">
    <property type="protein sequence ID" value="AAM91717.1"/>
    <property type="molecule type" value="mRNA"/>
</dbReference>
<dbReference type="EMBL" id="AK229165">
    <property type="protein sequence ID" value="BAF01036.1"/>
    <property type="molecule type" value="mRNA"/>
</dbReference>
<dbReference type="PIR" id="G96746">
    <property type="entry name" value="G96746"/>
</dbReference>
<dbReference type="RefSeq" id="NP_177374.1">
    <property type="nucleotide sequence ID" value="NM_105889.6"/>
</dbReference>
<dbReference type="SMR" id="Q9C7S5"/>
<dbReference type="BioGRID" id="28782">
    <property type="interactions" value="50"/>
</dbReference>
<dbReference type="FunCoup" id="Q9C7S5">
    <property type="interactions" value="234"/>
</dbReference>
<dbReference type="IntAct" id="Q9C7S5">
    <property type="interactions" value="56"/>
</dbReference>
<dbReference type="STRING" id="3702.Q9C7S5"/>
<dbReference type="GlyCosmos" id="Q9C7S5">
    <property type="glycosylation" value="17 sites, No reported glycans"/>
</dbReference>
<dbReference type="GlyGen" id="Q9C7S5">
    <property type="glycosylation" value="17 sites"/>
</dbReference>
<dbReference type="iPTMnet" id="Q9C7S5"/>
<dbReference type="PaxDb" id="3702-AT1G72300.1"/>
<dbReference type="ProteomicsDB" id="226040"/>
<dbReference type="EnsemblPlants" id="AT1G72300.1">
    <property type="protein sequence ID" value="AT1G72300.1"/>
    <property type="gene ID" value="AT1G72300"/>
</dbReference>
<dbReference type="GeneID" id="843562"/>
<dbReference type="Gramene" id="AT1G72300.1">
    <property type="protein sequence ID" value="AT1G72300.1"/>
    <property type="gene ID" value="AT1G72300"/>
</dbReference>
<dbReference type="KEGG" id="ath:AT1G72300"/>
<dbReference type="Araport" id="AT1G72300"/>
<dbReference type="TAIR" id="AT1G72300">
    <property type="gene designation" value="PSY1R"/>
</dbReference>
<dbReference type="eggNOG" id="ENOG502QTQY">
    <property type="taxonomic scope" value="Eukaryota"/>
</dbReference>
<dbReference type="HOGENOM" id="CLU_000288_22_9_1"/>
<dbReference type="InParanoid" id="Q9C7S5"/>
<dbReference type="OMA" id="TCLMERE"/>
<dbReference type="OrthoDB" id="647974at2759"/>
<dbReference type="PhylomeDB" id="Q9C7S5"/>
<dbReference type="PRO" id="PR:Q9C7S5"/>
<dbReference type="Proteomes" id="UP000006548">
    <property type="component" value="Chromosome 1"/>
</dbReference>
<dbReference type="ExpressionAtlas" id="Q9C7S5">
    <property type="expression patterns" value="baseline and differential"/>
</dbReference>
<dbReference type="GO" id="GO:0005886">
    <property type="term" value="C:plasma membrane"/>
    <property type="evidence" value="ECO:0000314"/>
    <property type="project" value="TAIR"/>
</dbReference>
<dbReference type="GO" id="GO:0005524">
    <property type="term" value="F:ATP binding"/>
    <property type="evidence" value="ECO:0007669"/>
    <property type="project" value="UniProtKB-KW"/>
</dbReference>
<dbReference type="GO" id="GO:0042802">
    <property type="term" value="F:identical protein binding"/>
    <property type="evidence" value="ECO:0000353"/>
    <property type="project" value="IntAct"/>
</dbReference>
<dbReference type="GO" id="GO:0001653">
    <property type="term" value="F:peptide receptor activity"/>
    <property type="evidence" value="ECO:0000315"/>
    <property type="project" value="TAIR"/>
</dbReference>
<dbReference type="GO" id="GO:0106310">
    <property type="term" value="F:protein serine kinase activity"/>
    <property type="evidence" value="ECO:0007669"/>
    <property type="project" value="RHEA"/>
</dbReference>
<dbReference type="GO" id="GO:0004674">
    <property type="term" value="F:protein serine/threonine kinase activity"/>
    <property type="evidence" value="ECO:0000314"/>
    <property type="project" value="TAIR"/>
</dbReference>
<dbReference type="GO" id="GO:0004888">
    <property type="term" value="F:transmembrane signaling receptor activity"/>
    <property type="evidence" value="ECO:0000315"/>
    <property type="project" value="TAIR"/>
</dbReference>
<dbReference type="GO" id="GO:0045851">
    <property type="term" value="P:pH reduction"/>
    <property type="evidence" value="ECO:0000314"/>
    <property type="project" value="TAIR"/>
</dbReference>
<dbReference type="GO" id="GO:0031347">
    <property type="term" value="P:regulation of defense response"/>
    <property type="evidence" value="ECO:0000316"/>
    <property type="project" value="TAIR"/>
</dbReference>
<dbReference type="GO" id="GO:0009826">
    <property type="term" value="P:unidimensional cell growth"/>
    <property type="evidence" value="ECO:0000315"/>
    <property type="project" value="TAIR"/>
</dbReference>
<dbReference type="FunFam" id="1.10.510.10:FF:000309">
    <property type="entry name" value="Leucine-rich repeat receptor-like protein kinase"/>
    <property type="match status" value="1"/>
</dbReference>
<dbReference type="FunFam" id="3.80.10.10:FF:001954">
    <property type="entry name" value="Leucine-rich repeat receptor-like protein kinase"/>
    <property type="match status" value="1"/>
</dbReference>
<dbReference type="FunFam" id="3.30.200.20:FF:000125">
    <property type="entry name" value="Protein STRUBBELIG-RECEPTOR FAMILY 8"/>
    <property type="match status" value="1"/>
</dbReference>
<dbReference type="FunFam" id="3.80.10.10:FF:000213">
    <property type="entry name" value="Tyrosine-sulfated glycopeptide receptor 1"/>
    <property type="match status" value="1"/>
</dbReference>
<dbReference type="Gene3D" id="3.30.200.20">
    <property type="entry name" value="Phosphorylase Kinase, domain 1"/>
    <property type="match status" value="1"/>
</dbReference>
<dbReference type="Gene3D" id="3.80.10.10">
    <property type="entry name" value="Ribonuclease Inhibitor"/>
    <property type="match status" value="2"/>
</dbReference>
<dbReference type="Gene3D" id="1.10.510.10">
    <property type="entry name" value="Transferase(Phosphotransferase) domain 1"/>
    <property type="match status" value="1"/>
</dbReference>
<dbReference type="InterPro" id="IPR011009">
    <property type="entry name" value="Kinase-like_dom_sf"/>
</dbReference>
<dbReference type="InterPro" id="IPR001611">
    <property type="entry name" value="Leu-rich_rpt"/>
</dbReference>
<dbReference type="InterPro" id="IPR003591">
    <property type="entry name" value="Leu-rich_rpt_typical-subtyp"/>
</dbReference>
<dbReference type="InterPro" id="IPR032675">
    <property type="entry name" value="LRR_dom_sf"/>
</dbReference>
<dbReference type="InterPro" id="IPR013210">
    <property type="entry name" value="LRR_N_plant-typ"/>
</dbReference>
<dbReference type="InterPro" id="IPR050647">
    <property type="entry name" value="Plant_LRR-RLKs"/>
</dbReference>
<dbReference type="InterPro" id="IPR000719">
    <property type="entry name" value="Prot_kinase_dom"/>
</dbReference>
<dbReference type="InterPro" id="IPR017441">
    <property type="entry name" value="Protein_kinase_ATP_BS"/>
</dbReference>
<dbReference type="InterPro" id="IPR001245">
    <property type="entry name" value="Ser-Thr/Tyr_kinase_cat_dom"/>
</dbReference>
<dbReference type="InterPro" id="IPR008271">
    <property type="entry name" value="Ser/Thr_kinase_AS"/>
</dbReference>
<dbReference type="PANTHER" id="PTHR48056">
    <property type="entry name" value="LRR RECEPTOR-LIKE SERINE/THREONINE-PROTEIN KINASE-RELATED"/>
    <property type="match status" value="1"/>
</dbReference>
<dbReference type="PANTHER" id="PTHR48056:SF18">
    <property type="entry name" value="NON-SPECIFIC SERINE_THREONINE PROTEIN KINASE"/>
    <property type="match status" value="1"/>
</dbReference>
<dbReference type="Pfam" id="PF00560">
    <property type="entry name" value="LRR_1"/>
    <property type="match status" value="7"/>
</dbReference>
<dbReference type="Pfam" id="PF08263">
    <property type="entry name" value="LRRNT_2"/>
    <property type="match status" value="1"/>
</dbReference>
<dbReference type="Pfam" id="PF07714">
    <property type="entry name" value="PK_Tyr_Ser-Thr"/>
    <property type="match status" value="1"/>
</dbReference>
<dbReference type="PRINTS" id="PR00019">
    <property type="entry name" value="LEURICHRPT"/>
</dbReference>
<dbReference type="SMART" id="SM00369">
    <property type="entry name" value="LRR_TYP"/>
    <property type="match status" value="6"/>
</dbReference>
<dbReference type="SMART" id="SM00220">
    <property type="entry name" value="S_TKc"/>
    <property type="match status" value="1"/>
</dbReference>
<dbReference type="SUPFAM" id="SSF52058">
    <property type="entry name" value="L domain-like"/>
    <property type="match status" value="1"/>
</dbReference>
<dbReference type="SUPFAM" id="SSF56112">
    <property type="entry name" value="Protein kinase-like (PK-like)"/>
    <property type="match status" value="1"/>
</dbReference>
<dbReference type="SUPFAM" id="SSF52047">
    <property type="entry name" value="RNI-like"/>
    <property type="match status" value="1"/>
</dbReference>
<dbReference type="PROSITE" id="PS51450">
    <property type="entry name" value="LRR"/>
    <property type="match status" value="12"/>
</dbReference>
<dbReference type="PROSITE" id="PS00107">
    <property type="entry name" value="PROTEIN_KINASE_ATP"/>
    <property type="match status" value="1"/>
</dbReference>
<dbReference type="PROSITE" id="PS50011">
    <property type="entry name" value="PROTEIN_KINASE_DOM"/>
    <property type="match status" value="1"/>
</dbReference>
<dbReference type="PROSITE" id="PS00108">
    <property type="entry name" value="PROTEIN_KINASE_ST"/>
    <property type="match status" value="1"/>
</dbReference>
<protein>
    <recommendedName>
        <fullName evidence="10">Tyrosine-sulfated glycopeptide receptor 1</fullName>
        <ecNumber evidence="10">2.7.11.1</ecNumber>
    </recommendedName>
    <alternativeName>
        <fullName evidence="9">PSY1 receptor</fullName>
    </alternativeName>
</protein>
<sequence length="1095" mass="121521">MIDEKMRSKSIGPFVRQVKPLSPHMVLFVLLYVLSISVFFLTVSEAVCNLQDRDSLLWFSGNVSSPVSPLHWNSSIDCCSWEGISCDKSPENRVTSIILSSRGLSGNLPSSVLDLQRLSRLDLSHNRLSGPLPPGFLSALDQLLVLDLSYNSFKGELPLQQSFGNGSNGIFPIQTVDLSSNLLEGEILSSSVFLQGAFNLTSFNVSNNSFTGSIPSFMCTASPQLTKLDFSYNDFSGDLSQELSRCSRLSVLRAGFNNLSGEIPKEIYNLPELEQLFLPVNRLSGKIDNGITRLTKLTLLELYSNHIEGEIPKDIGKLSKLSSLQLHVNNLMGSIPVSLANCTKLVKLNLRVNQLGGTLSAIDFSRFQSLSILDLGNNSFTGEFPSTVYSCKMMTAMRFAGNKLTGQISPQVLELESLSFFTFSDNKMTNLTGALSILQGCKKLSTLIMAKNFYDETVPSNKDFLRSDGFPSLQIFGIGACRLTGEIPAWLIKLQRVEVMDLSMNRFVGTIPGWLGTLPDLFYLDLSDNFLTGELPKELFQLRALMSQKAYDATERNYLELPVFVNPNNVTTNQQYNQLSSLPPTIYIKRNNLTGTIPVEVGQLKVLHILELLGNNFSGSIPDELSNLTNLERLDLSNNNLSGRIPWSLTGLHFLSYFNVANNTLSGPIPTGTQFDTFPKANFEGNPLLCGGVLLTSCDPTQHSTTKMGKGKVNRTLVLGLVLGLFFGVSLILVLLALLVLSKRRVNPGDSENAELEINSNGSYSEVPPGSDKDISLVLLFGNSRYEVKDLTIFELLKATDNFSQANIIGCGGFGLVYKATLDNGTKLAVKKLTGDYGMMEKEFKAEVEVLSRAKHENLVALQGYCVHDSARILIYSFMENGSLDYWLHENPEGPAQLDWPKRLNIMRGASSGLAYMHQICEPHIVHRDIKSSNILLDGNFKAYVADFGLSRLILPYRTHVTTELVGTLGYIPPEYGQAWVATLRGDVYSFGVVMLELLTGKRPMEVFRPKMSRELVAWVHTMKRDGKPEEVFDTLLRESGNEEAMLRVLDIACMCVNQNPMKRPNIQQVVDWLKNIEAEKNQNNREEPEEEEET</sequence>
<gene>
    <name evidence="9" type="primary">PSY1R</name>
    <name evidence="10" type="synonym">PSYR1</name>
    <name evidence="11" type="ordered locus">At1g72300</name>
    <name evidence="12" type="ORF">T9N14.20</name>
</gene>
<comment type="function">
    <text evidence="6 7 8">Tyrosine-sulfated glycopeptide receptor with a serine/threonine-protein kinase activity (PubMed:17989228, PubMed:25267325). Regulates, in response to tyrosine-sulfated glycopeptide binding, a signaling cascade involved in cellular proliferation and plant growth (PubMed:17989228). Not involved in PSK perception (PubMed:17989228). Involved in plant immunity, with antagonistic effects on bacterial and fungal resistances (PubMed:23062058). Mediates activation of the plasma membrane H(+)-ATPase by PSY1 (PubMed:25267325). Phosphorylates AHA2 at Thr-881 (PubMed:25267325).</text>
</comment>
<comment type="catalytic activity">
    <reaction evidence="10">
        <text>L-seryl-[protein] + ATP = O-phospho-L-seryl-[protein] + ADP + H(+)</text>
        <dbReference type="Rhea" id="RHEA:17989"/>
        <dbReference type="Rhea" id="RHEA-COMP:9863"/>
        <dbReference type="Rhea" id="RHEA-COMP:11604"/>
        <dbReference type="ChEBI" id="CHEBI:15378"/>
        <dbReference type="ChEBI" id="CHEBI:29999"/>
        <dbReference type="ChEBI" id="CHEBI:30616"/>
        <dbReference type="ChEBI" id="CHEBI:83421"/>
        <dbReference type="ChEBI" id="CHEBI:456216"/>
        <dbReference type="EC" id="2.7.11.1"/>
    </reaction>
</comment>
<comment type="catalytic activity">
    <reaction evidence="10">
        <text>L-threonyl-[protein] + ATP = O-phospho-L-threonyl-[protein] + ADP + H(+)</text>
        <dbReference type="Rhea" id="RHEA:46608"/>
        <dbReference type="Rhea" id="RHEA-COMP:11060"/>
        <dbReference type="Rhea" id="RHEA-COMP:11605"/>
        <dbReference type="ChEBI" id="CHEBI:15378"/>
        <dbReference type="ChEBI" id="CHEBI:30013"/>
        <dbReference type="ChEBI" id="CHEBI:30616"/>
        <dbReference type="ChEBI" id="CHEBI:61977"/>
        <dbReference type="ChEBI" id="CHEBI:456216"/>
        <dbReference type="EC" id="2.7.11.1"/>
    </reaction>
</comment>
<comment type="subunit">
    <text evidence="8">Homo- and heterodimers with PSKR1. Interacts (via C-terminus) with AHA1 and AHA2 (via the R-domain).</text>
</comment>
<comment type="interaction">
    <interactant intactId="EBI-16904988">
        <id>Q9C7S5</id>
    </interactant>
    <interactant intactId="EBI-16902452">
        <id>Q8VYT3</id>
        <label>At4g30520</label>
    </interactant>
    <organismsDiffer>false</organismsDiffer>
    <experiments>2</experiments>
</comment>
<comment type="interaction">
    <interactant intactId="EBI-16904988">
        <id>Q9C7S5</id>
    </interactant>
    <interactant intactId="EBI-617138">
        <id>Q94F62</id>
        <label>BAK1</label>
    </interactant>
    <organismsDiffer>false</organismsDiffer>
    <experiments>2</experiments>
</comment>
<comment type="interaction">
    <interactant intactId="EBI-16904988">
        <id>Q9C7S5</id>
    </interactant>
    <interactant intactId="EBI-16895926">
        <id>Q6XAT2</id>
        <label>ERL2</label>
    </interactant>
    <organismsDiffer>false</organismsDiffer>
    <experiments>3</experiments>
</comment>
<comment type="interaction">
    <interactant intactId="EBI-16904988">
        <id>Q9C7S5</id>
    </interactant>
    <interactant intactId="EBI-16924837">
        <id>Q9C8I6</id>
        <label>IOS1</label>
    </interactant>
    <organismsDiffer>false</organismsDiffer>
    <experiments>3</experiments>
</comment>
<comment type="interaction">
    <interactant intactId="EBI-16904988">
        <id>Q9C7S5</id>
    </interactant>
    <interactant intactId="EBI-20651739">
        <id>Q9ZVD4</id>
        <label>LRR-RLK</label>
    </interactant>
    <organismsDiffer>false</organismsDiffer>
    <experiments>2</experiments>
</comment>
<comment type="interaction">
    <interactant intactId="EBI-16904988">
        <id>Q9C7S5</id>
    </interactant>
    <interactant intactId="EBI-16146189">
        <id>Q9LFS4</id>
        <label>NIK1</label>
    </interactant>
    <organismsDiffer>false</organismsDiffer>
    <experiments>3</experiments>
</comment>
<comment type="interaction">
    <interactant intactId="EBI-16904988">
        <id>Q9C7S5</id>
    </interactant>
    <interactant intactId="EBI-16904988">
        <id>Q9C7S5</id>
        <label>PSY1R</label>
    </interactant>
    <organismsDiffer>false</organismsDiffer>
    <experiments>2</experiments>
</comment>
<comment type="interaction">
    <interactant intactId="EBI-16904988">
        <id>Q9C7S5</id>
    </interactant>
    <interactant intactId="EBI-1238953">
        <id>Q9ZRF9</id>
        <label>RPK1</label>
    </interactant>
    <organismsDiffer>false</organismsDiffer>
    <experiments>2</experiments>
</comment>
<comment type="interaction">
    <interactant intactId="EBI-16904988">
        <id>Q9C7S5</id>
    </interactant>
    <interactant intactId="EBI-17072125">
        <id>Q8RWZ1</id>
        <label>SUB</label>
    </interactant>
    <organismsDiffer>false</organismsDiffer>
    <experiments>2</experiments>
</comment>
<comment type="subcellular location">
    <subcellularLocation>
        <location evidence="8">Cell membrane</location>
        <topology evidence="10">Multi-pass membrane protein</topology>
    </subcellularLocation>
</comment>
<comment type="tissue specificity">
    <text evidence="6">Expressed ubiquitously, including in the shoot apical meristem and in the elongation zone of the root meristem.</text>
</comment>
<comment type="PTM">
    <text evidence="8">Autophosphorylated.</text>
</comment>
<comment type="disruption phenotype">
    <text evidence="6 7 8">Loss of sensitivity to PSY1 (PubMed:17989228). Loss of PSY1 induced phosphorylation of AHA2 and reduced hypocotyl elongation (PubMed:25267325). Increased symptom formation, disease index, lesion size and fungal growth after infection with A.brassicicola, but increased resistance to bacterial infection (PubMed:23062058).</text>
</comment>
<comment type="miscellaneous">
    <text evidence="6">PSYR1 and PSKR1 mediate a signaling pathway by two distinct ligands, which redundantly contribute to cellular proliferation and plant growth.</text>
</comment>
<comment type="similarity">
    <text evidence="4">Belongs to the protein kinase superfamily. Ser/Thr protein kinase family.</text>
</comment>
<feature type="chain" id="PRO_0000365619" description="Tyrosine-sulfated glycopeptide receptor 1">
    <location>
        <begin position="1"/>
        <end position="1095"/>
    </location>
</feature>
<feature type="transmembrane region" description="Helical" evidence="3">
    <location>
        <begin position="23"/>
        <end position="43"/>
    </location>
</feature>
<feature type="transmembrane region" description="Helical" evidence="3">
    <location>
        <begin position="721"/>
        <end position="741"/>
    </location>
</feature>
<feature type="repeat" description="LRR 1">
    <location>
        <begin position="91"/>
        <end position="115"/>
    </location>
</feature>
<feature type="repeat" description="LRR 2">
    <location>
        <begin position="116"/>
        <end position="139"/>
    </location>
</feature>
<feature type="repeat" description="LRR 3">
    <location>
        <begin position="141"/>
        <end position="165"/>
    </location>
</feature>
<feature type="repeat" description="LRR 4">
    <location>
        <begin position="170"/>
        <end position="195"/>
    </location>
</feature>
<feature type="repeat" description="LRR 5">
    <location>
        <begin position="197"/>
        <end position="221"/>
    </location>
</feature>
<feature type="repeat" description="LRR 6">
    <location>
        <begin position="223"/>
        <end position="246"/>
    </location>
</feature>
<feature type="repeat" description="LRR 7">
    <location>
        <begin position="247"/>
        <end position="270"/>
    </location>
</feature>
<feature type="repeat" description="LRR 8">
    <location>
        <begin position="271"/>
        <end position="294"/>
    </location>
</feature>
<feature type="repeat" description="LRR 9">
    <location>
        <begin position="295"/>
        <end position="318"/>
    </location>
</feature>
<feature type="repeat" description="LRR 10">
    <location>
        <begin position="320"/>
        <end position="342"/>
    </location>
</feature>
<feature type="repeat" description="LRR 11">
    <location>
        <begin position="344"/>
        <end position="366"/>
    </location>
</feature>
<feature type="repeat" description="LRR 12">
    <location>
        <begin position="367"/>
        <end position="391"/>
    </location>
</feature>
<feature type="repeat" description="LRR 13">
    <location>
        <begin position="393"/>
        <end position="415"/>
    </location>
</feature>
<feature type="repeat" description="LRR 14">
    <location>
        <begin position="416"/>
        <end position="439"/>
    </location>
</feature>
<feature type="repeat" description="LRR 15">
    <location>
        <begin position="441"/>
        <end position="466"/>
    </location>
</feature>
<feature type="repeat" description="LRR 16">
    <location>
        <begin position="470"/>
        <end position="494"/>
    </location>
</feature>
<feature type="repeat" description="LRR 17">
    <location>
        <begin position="495"/>
        <end position="517"/>
    </location>
</feature>
<feature type="repeat" description="LRR 18">
    <location>
        <begin position="518"/>
        <end position="542"/>
    </location>
</feature>
<feature type="repeat" description="LRR 19">
    <location>
        <begin position="566"/>
        <end position="589"/>
    </location>
</feature>
<feature type="repeat" description="LRR 20">
    <location>
        <begin position="604"/>
        <end position="628"/>
    </location>
</feature>
<feature type="repeat" description="LRR 21">
    <location>
        <begin position="629"/>
        <end position="652"/>
    </location>
</feature>
<feature type="repeat" description="LRR 22">
    <location>
        <begin position="654"/>
        <end position="677"/>
    </location>
</feature>
<feature type="domain" description="Protein kinase" evidence="4">
    <location>
        <begin position="803"/>
        <end position="1074"/>
    </location>
</feature>
<feature type="active site" description="Proton acceptor" evidence="4 5">
    <location>
        <position position="929"/>
    </location>
</feature>
<feature type="binding site" evidence="4">
    <location>
        <begin position="809"/>
        <end position="817"/>
    </location>
    <ligand>
        <name>ATP</name>
        <dbReference type="ChEBI" id="CHEBI:30616"/>
    </ligand>
</feature>
<feature type="binding site" evidence="4">
    <location>
        <position position="831"/>
    </location>
    <ligand>
        <name>ATP</name>
        <dbReference type="ChEBI" id="CHEBI:30616"/>
    </ligand>
</feature>
<feature type="modified residue" description="Phosphothreonine" evidence="2">
    <location>
        <position position="792"/>
    </location>
</feature>
<feature type="modified residue" description="Phosphothreonine" evidence="2">
    <location>
        <position position="800"/>
    </location>
</feature>
<feature type="modified residue" description="Phosphotyrosine" evidence="2">
    <location>
        <position position="876"/>
    </location>
</feature>
<feature type="modified residue" description="Phosphotyrosine" evidence="1">
    <location>
        <position position="916"/>
    </location>
</feature>
<feature type="modified residue" description="Phosphotyrosine" evidence="1">
    <location>
        <position position="971"/>
    </location>
</feature>
<feature type="glycosylation site" description="N-linked (GlcNAc...) asparagine" evidence="3">
    <location>
        <position position="62"/>
    </location>
</feature>
<feature type="glycosylation site" description="N-linked (GlcNAc...) asparagine" evidence="3">
    <location>
        <position position="73"/>
    </location>
</feature>
<feature type="glycosylation site" description="N-linked (GlcNAc...) asparagine" evidence="3">
    <location>
        <position position="165"/>
    </location>
</feature>
<feature type="glycosylation site" description="N-linked (GlcNAc...) asparagine" evidence="3">
    <location>
        <position position="199"/>
    </location>
</feature>
<feature type="glycosylation site" description="N-linked (GlcNAc...) asparagine" evidence="3">
    <location>
        <position position="204"/>
    </location>
</feature>
<feature type="glycosylation site" description="N-linked (GlcNAc...) asparagine" evidence="3">
    <location>
        <position position="207"/>
    </location>
</feature>
<feature type="glycosylation site" description="N-linked (GlcNAc...) asparagine" evidence="3">
    <location>
        <position position="258"/>
    </location>
</feature>
<feature type="glycosylation site" description="N-linked (GlcNAc...) asparagine" evidence="3">
    <location>
        <position position="341"/>
    </location>
</feature>
<feature type="glycosylation site" description="N-linked (GlcNAc...) asparagine" evidence="3">
    <location>
        <position position="377"/>
    </location>
</feature>
<feature type="glycosylation site" description="N-linked (GlcNAc...) asparagine" evidence="3">
    <location>
        <position position="430"/>
    </location>
</feature>
<feature type="glycosylation site" description="N-linked (GlcNAc...) asparagine" evidence="3">
    <location>
        <position position="569"/>
    </location>
</feature>
<feature type="glycosylation site" description="N-linked (GlcNAc...) asparagine" evidence="3">
    <location>
        <position position="592"/>
    </location>
</feature>
<feature type="glycosylation site" description="N-linked (GlcNAc...) asparagine" evidence="3">
    <location>
        <position position="616"/>
    </location>
</feature>
<feature type="glycosylation site" description="N-linked (GlcNAc...) asparagine" evidence="3">
    <location>
        <position position="627"/>
    </location>
</feature>
<feature type="glycosylation site" description="N-linked (GlcNAc...) asparagine" evidence="3">
    <location>
        <position position="640"/>
    </location>
</feature>
<feature type="glycosylation site" description="N-linked (GlcNAc...) asparagine" evidence="3">
    <location>
        <position position="662"/>
    </location>
</feature>
<feature type="glycosylation site" description="N-linked (GlcNAc...) asparagine" evidence="3">
    <location>
        <position position="714"/>
    </location>
</feature>
<feature type="mutagenesis site" description="Loss of kinase activity and loss of interaction with AHA1 and AHA2." evidence="8">
    <location>
        <begin position="1072"/>
        <end position="1095"/>
    </location>
</feature>
<proteinExistence type="evidence at protein level"/>
<accession>Q9C7S5</accession>